<gene>
    <name evidence="1" type="primary">rpsM</name>
    <name type="ordered locus">FRAAL1107</name>
</gene>
<keyword id="KW-1185">Reference proteome</keyword>
<keyword id="KW-0687">Ribonucleoprotein</keyword>
<keyword id="KW-0689">Ribosomal protein</keyword>
<keyword id="KW-0694">RNA-binding</keyword>
<keyword id="KW-0699">rRNA-binding</keyword>
<keyword id="KW-0820">tRNA-binding</keyword>
<organism>
    <name type="scientific">Frankia alni (strain DSM 45986 / CECT 9034 / ACN14a)</name>
    <dbReference type="NCBI Taxonomy" id="326424"/>
    <lineage>
        <taxon>Bacteria</taxon>
        <taxon>Bacillati</taxon>
        <taxon>Actinomycetota</taxon>
        <taxon>Actinomycetes</taxon>
        <taxon>Frankiales</taxon>
        <taxon>Frankiaceae</taxon>
        <taxon>Frankia</taxon>
    </lineage>
</organism>
<evidence type="ECO:0000255" key="1">
    <source>
        <dbReference type="HAMAP-Rule" id="MF_01315"/>
    </source>
</evidence>
<evidence type="ECO:0000256" key="2">
    <source>
        <dbReference type="SAM" id="MobiDB-lite"/>
    </source>
</evidence>
<evidence type="ECO:0000305" key="3"/>
<reference key="1">
    <citation type="journal article" date="2007" name="Genome Res.">
        <title>Genome characteristics of facultatively symbiotic Frankia sp. strains reflect host range and host plant biogeography.</title>
        <authorList>
            <person name="Normand P."/>
            <person name="Lapierre P."/>
            <person name="Tisa L.S."/>
            <person name="Gogarten J.P."/>
            <person name="Alloisio N."/>
            <person name="Bagnarol E."/>
            <person name="Bassi C.A."/>
            <person name="Berry A.M."/>
            <person name="Bickhart D.M."/>
            <person name="Choisne N."/>
            <person name="Couloux A."/>
            <person name="Cournoyer B."/>
            <person name="Cruveiller S."/>
            <person name="Daubin V."/>
            <person name="Demange N."/>
            <person name="Francino M.P."/>
            <person name="Goltsman E."/>
            <person name="Huang Y."/>
            <person name="Kopp O.R."/>
            <person name="Labarre L."/>
            <person name="Lapidus A."/>
            <person name="Lavire C."/>
            <person name="Marechal J."/>
            <person name="Martinez M."/>
            <person name="Mastronunzio J.E."/>
            <person name="Mullin B.C."/>
            <person name="Niemann J."/>
            <person name="Pujic P."/>
            <person name="Rawnsley T."/>
            <person name="Rouy Z."/>
            <person name="Schenowitz C."/>
            <person name="Sellstedt A."/>
            <person name="Tavares F."/>
            <person name="Tomkins J.P."/>
            <person name="Vallenet D."/>
            <person name="Valverde C."/>
            <person name="Wall L.G."/>
            <person name="Wang Y."/>
            <person name="Medigue C."/>
            <person name="Benson D.R."/>
        </authorList>
    </citation>
    <scope>NUCLEOTIDE SEQUENCE [LARGE SCALE GENOMIC DNA]</scope>
    <source>
        <strain>DSM 45986 / CECT 9034 / ACN14a</strain>
    </source>
</reference>
<proteinExistence type="inferred from homology"/>
<accession>Q0RRP6</accession>
<dbReference type="EMBL" id="CT573213">
    <property type="protein sequence ID" value="CAJ59771.1"/>
    <property type="molecule type" value="Genomic_DNA"/>
</dbReference>
<dbReference type="RefSeq" id="WP_009740504.1">
    <property type="nucleotide sequence ID" value="NC_008278.1"/>
</dbReference>
<dbReference type="SMR" id="Q0RRP6"/>
<dbReference type="STRING" id="326424.FRAAL1107"/>
<dbReference type="KEGG" id="fal:FRAAL1107"/>
<dbReference type="eggNOG" id="COG0099">
    <property type="taxonomic scope" value="Bacteria"/>
</dbReference>
<dbReference type="HOGENOM" id="CLU_103849_1_2_11"/>
<dbReference type="OrthoDB" id="9803610at2"/>
<dbReference type="Proteomes" id="UP000000657">
    <property type="component" value="Chromosome"/>
</dbReference>
<dbReference type="GO" id="GO:0005829">
    <property type="term" value="C:cytosol"/>
    <property type="evidence" value="ECO:0007669"/>
    <property type="project" value="TreeGrafter"/>
</dbReference>
<dbReference type="GO" id="GO:0015935">
    <property type="term" value="C:small ribosomal subunit"/>
    <property type="evidence" value="ECO:0007669"/>
    <property type="project" value="TreeGrafter"/>
</dbReference>
<dbReference type="GO" id="GO:0019843">
    <property type="term" value="F:rRNA binding"/>
    <property type="evidence" value="ECO:0007669"/>
    <property type="project" value="UniProtKB-UniRule"/>
</dbReference>
<dbReference type="GO" id="GO:0003735">
    <property type="term" value="F:structural constituent of ribosome"/>
    <property type="evidence" value="ECO:0007669"/>
    <property type="project" value="InterPro"/>
</dbReference>
<dbReference type="GO" id="GO:0000049">
    <property type="term" value="F:tRNA binding"/>
    <property type="evidence" value="ECO:0007669"/>
    <property type="project" value="UniProtKB-UniRule"/>
</dbReference>
<dbReference type="GO" id="GO:0006412">
    <property type="term" value="P:translation"/>
    <property type="evidence" value="ECO:0007669"/>
    <property type="project" value="UniProtKB-UniRule"/>
</dbReference>
<dbReference type="FunFam" id="1.10.8.50:FF:000001">
    <property type="entry name" value="30S ribosomal protein S13"/>
    <property type="match status" value="1"/>
</dbReference>
<dbReference type="FunFam" id="4.10.910.10:FF:000001">
    <property type="entry name" value="30S ribosomal protein S13"/>
    <property type="match status" value="1"/>
</dbReference>
<dbReference type="Gene3D" id="1.10.8.50">
    <property type="match status" value="1"/>
</dbReference>
<dbReference type="Gene3D" id="4.10.910.10">
    <property type="entry name" value="30s ribosomal protein s13, domain 2"/>
    <property type="match status" value="1"/>
</dbReference>
<dbReference type="HAMAP" id="MF_01315">
    <property type="entry name" value="Ribosomal_uS13"/>
    <property type="match status" value="1"/>
</dbReference>
<dbReference type="InterPro" id="IPR027437">
    <property type="entry name" value="Rbsml_uS13_C"/>
</dbReference>
<dbReference type="InterPro" id="IPR001892">
    <property type="entry name" value="Ribosomal_uS13"/>
</dbReference>
<dbReference type="InterPro" id="IPR010979">
    <property type="entry name" value="Ribosomal_uS13-like_H2TH"/>
</dbReference>
<dbReference type="InterPro" id="IPR019980">
    <property type="entry name" value="Ribosomal_uS13_bac-type"/>
</dbReference>
<dbReference type="InterPro" id="IPR018269">
    <property type="entry name" value="Ribosomal_uS13_CS"/>
</dbReference>
<dbReference type="NCBIfam" id="TIGR03631">
    <property type="entry name" value="uS13_bact"/>
    <property type="match status" value="1"/>
</dbReference>
<dbReference type="PANTHER" id="PTHR10871">
    <property type="entry name" value="30S RIBOSOMAL PROTEIN S13/40S RIBOSOMAL PROTEIN S18"/>
    <property type="match status" value="1"/>
</dbReference>
<dbReference type="PANTHER" id="PTHR10871:SF1">
    <property type="entry name" value="SMALL RIBOSOMAL SUBUNIT PROTEIN US13M"/>
    <property type="match status" value="1"/>
</dbReference>
<dbReference type="Pfam" id="PF00416">
    <property type="entry name" value="Ribosomal_S13"/>
    <property type="match status" value="1"/>
</dbReference>
<dbReference type="PIRSF" id="PIRSF002134">
    <property type="entry name" value="Ribosomal_S13"/>
    <property type="match status" value="1"/>
</dbReference>
<dbReference type="SUPFAM" id="SSF46946">
    <property type="entry name" value="S13-like H2TH domain"/>
    <property type="match status" value="1"/>
</dbReference>
<dbReference type="PROSITE" id="PS00646">
    <property type="entry name" value="RIBOSOMAL_S13_1"/>
    <property type="match status" value="1"/>
</dbReference>
<dbReference type="PROSITE" id="PS50159">
    <property type="entry name" value="RIBOSOMAL_S13_2"/>
    <property type="match status" value="1"/>
</dbReference>
<name>RS13_FRAAA</name>
<sequence length="126" mass="14587">MARLSGVDLPREKRVEIALTYIFGIGRTRSRETLAATGVNPDTRVRDLSEDEIVRLREWIDANYRVEGDLNREIKQDIRRKMEIGCYQGLRHRRNLPVHGQRTHTNARTRKGPRRAIAGKKKAGKK</sequence>
<comment type="function">
    <text evidence="1">Located at the top of the head of the 30S subunit, it contacts several helices of the 16S rRNA. In the 70S ribosome it contacts the 23S rRNA (bridge B1a) and protein L5 of the 50S subunit (bridge B1b), connecting the 2 subunits; these bridges are implicated in subunit movement. Contacts the tRNAs in the A and P-sites.</text>
</comment>
<comment type="subunit">
    <text evidence="1">Part of the 30S ribosomal subunit. Forms a loose heterodimer with protein S19. Forms two bridges to the 50S subunit in the 70S ribosome.</text>
</comment>
<comment type="similarity">
    <text evidence="1">Belongs to the universal ribosomal protein uS13 family.</text>
</comment>
<protein>
    <recommendedName>
        <fullName evidence="1">Small ribosomal subunit protein uS13</fullName>
    </recommendedName>
    <alternativeName>
        <fullName evidence="3">30S ribosomal protein S13</fullName>
    </alternativeName>
</protein>
<feature type="chain" id="PRO_0000306609" description="Small ribosomal subunit protein uS13">
    <location>
        <begin position="1"/>
        <end position="126"/>
    </location>
</feature>
<feature type="region of interest" description="Disordered" evidence="2">
    <location>
        <begin position="96"/>
        <end position="126"/>
    </location>
</feature>